<organism>
    <name type="scientific">Californiconus californicus</name>
    <name type="common">California cone</name>
    <name type="synonym">Conus californicus</name>
    <dbReference type="NCBI Taxonomy" id="1736779"/>
    <lineage>
        <taxon>Eukaryota</taxon>
        <taxon>Metazoa</taxon>
        <taxon>Spiralia</taxon>
        <taxon>Lophotrochozoa</taxon>
        <taxon>Mollusca</taxon>
        <taxon>Gastropoda</taxon>
        <taxon>Caenogastropoda</taxon>
        <taxon>Neogastropoda</taxon>
        <taxon>Conoidea</taxon>
        <taxon>Conidae</taxon>
        <taxon>Californiconus</taxon>
    </lineage>
</organism>
<protein>
    <recommendedName>
        <fullName evidence="2">Conotoxin Cltx-2</fullName>
    </recommendedName>
    <alternativeName>
        <fullName evidence="3">CalTx-2</fullName>
    </alternativeName>
</protein>
<feature type="peptide" id="PRO_0000415050" description="Conotoxin Cltx-2">
    <location>
        <begin position="1"/>
        <end position="31"/>
    </location>
</feature>
<feature type="modified residue" description="4-hydroxyproline" evidence="4">
    <location>
        <position position="6"/>
    </location>
</feature>
<feature type="modified residue" description="4-hydroxyproline" evidence="4">
    <location>
        <position position="31"/>
    </location>
</feature>
<dbReference type="GO" id="GO:0005576">
    <property type="term" value="C:extracellular region"/>
    <property type="evidence" value="ECO:0007669"/>
    <property type="project" value="UniProtKB-SubCell"/>
</dbReference>
<dbReference type="GO" id="GO:0090729">
    <property type="term" value="F:toxin activity"/>
    <property type="evidence" value="ECO:0007669"/>
    <property type="project" value="UniProtKB-KW"/>
</dbReference>
<name>CUX2_CONCL</name>
<comment type="subcellular location">
    <subcellularLocation>
        <location>Secreted</location>
    </subcellularLocation>
</comment>
<comment type="tissue specificity">
    <text>Expressed by the venom duct.</text>
</comment>
<comment type="domain">
    <text>The cysteine framework is C-C-C-CC-C.</text>
</comment>
<comment type="PTM">
    <text evidence="1">Contains 4 disulfide bonds.</text>
</comment>
<sequence>SLCDKPHHNCIDGQTCYHTCCQNGLKCVRYP</sequence>
<reference key="1">
    <citation type="journal article" date="2010" name="Mol. Phylogenet. Evol.">
        <title>Evolution of Conus peptide toxins: analysis of Conus californicus Reeve, 1844.</title>
        <authorList>
            <person name="Biggs J.S."/>
            <person name="Watkins M."/>
            <person name="Puillandre N."/>
            <person name="Ownby J.P."/>
            <person name="Lopez-Vera E."/>
            <person name="Christensen S."/>
            <person name="Moreno K.J."/>
            <person name="Bernaldez J."/>
            <person name="Licea-Navarro A."/>
            <person name="Corneli P.S."/>
            <person name="Olivera B.M."/>
        </authorList>
    </citation>
    <scope>PROTEIN SEQUENCE</scope>
    <scope>HYDROXYLATION AT PRO-6 AND PRO-31</scope>
    <source>
        <tissue>Venom</tissue>
    </source>
</reference>
<evidence type="ECO:0000250" key="1"/>
<evidence type="ECO:0000303" key="2">
    <source>
    </source>
</evidence>
<evidence type="ECO:0000305" key="3"/>
<evidence type="ECO:0000305" key="4">
    <source>
    </source>
</evidence>
<proteinExistence type="evidence at protein level"/>
<accession>P0DJB4</accession>
<keyword id="KW-0903">Direct protein sequencing</keyword>
<keyword id="KW-1015">Disulfide bond</keyword>
<keyword id="KW-0379">Hydroxylation</keyword>
<keyword id="KW-0528">Neurotoxin</keyword>
<keyword id="KW-0964">Secreted</keyword>
<keyword id="KW-0800">Toxin</keyword>